<name>DAPEL_BACAN</name>
<comment type="function">
    <text evidence="1">Catalyzes the conversion of N-acetyl-diaminopimelate to diaminopimelate and acetate.</text>
</comment>
<comment type="catalytic activity">
    <reaction evidence="1">
        <text>N-acetyl-(2S,6S)-2,6-diaminopimelate + H2O = (2S,6S)-2,6-diaminopimelate + acetate</text>
        <dbReference type="Rhea" id="RHEA:20405"/>
        <dbReference type="ChEBI" id="CHEBI:15377"/>
        <dbReference type="ChEBI" id="CHEBI:30089"/>
        <dbReference type="ChEBI" id="CHEBI:57609"/>
        <dbReference type="ChEBI" id="CHEBI:58767"/>
        <dbReference type="EC" id="3.5.1.47"/>
    </reaction>
</comment>
<comment type="pathway">
    <text evidence="1">Amino-acid biosynthesis; L-lysine biosynthesis via DAP pathway; LL-2,6-diaminopimelate from (S)-tetrahydrodipicolinate (acetylase route): step 3/3.</text>
</comment>
<comment type="similarity">
    <text evidence="1">Belongs to the peptidase M20A family. N-acetyldiaminopimelate deacetylase subfamily.</text>
</comment>
<reference key="1">
    <citation type="journal article" date="2003" name="Nature">
        <title>The genome sequence of Bacillus anthracis Ames and comparison to closely related bacteria.</title>
        <authorList>
            <person name="Read T.D."/>
            <person name="Peterson S.N."/>
            <person name="Tourasse N.J."/>
            <person name="Baillie L.W."/>
            <person name="Paulsen I.T."/>
            <person name="Nelson K.E."/>
            <person name="Tettelin H."/>
            <person name="Fouts D.E."/>
            <person name="Eisen J.A."/>
            <person name="Gill S.R."/>
            <person name="Holtzapple E.K."/>
            <person name="Okstad O.A."/>
            <person name="Helgason E."/>
            <person name="Rilstone J."/>
            <person name="Wu M."/>
            <person name="Kolonay J.F."/>
            <person name="Beanan M.J."/>
            <person name="Dodson R.J."/>
            <person name="Brinkac L.M."/>
            <person name="Gwinn M.L."/>
            <person name="DeBoy R.T."/>
            <person name="Madpu R."/>
            <person name="Daugherty S.C."/>
            <person name="Durkin A.S."/>
            <person name="Haft D.H."/>
            <person name="Nelson W.C."/>
            <person name="Peterson J.D."/>
            <person name="Pop M."/>
            <person name="Khouri H.M."/>
            <person name="Radune D."/>
            <person name="Benton J.L."/>
            <person name="Mahamoud Y."/>
            <person name="Jiang L."/>
            <person name="Hance I.R."/>
            <person name="Weidman J.F."/>
            <person name="Berry K.J."/>
            <person name="Plaut R.D."/>
            <person name="Wolf A.M."/>
            <person name="Watkins K.L."/>
            <person name="Nierman W.C."/>
            <person name="Hazen A."/>
            <person name="Cline R.T."/>
            <person name="Redmond C."/>
            <person name="Thwaite J.E."/>
            <person name="White O."/>
            <person name="Salzberg S.L."/>
            <person name="Thomason B."/>
            <person name="Friedlander A.M."/>
            <person name="Koehler T.M."/>
            <person name="Hanna P.C."/>
            <person name="Kolstoe A.-B."/>
            <person name="Fraser C.M."/>
        </authorList>
    </citation>
    <scope>NUCLEOTIDE SEQUENCE [LARGE SCALE GENOMIC DNA]</scope>
    <source>
        <strain>Ames / isolate Porton</strain>
    </source>
</reference>
<reference key="2">
    <citation type="submission" date="2004-01" db="EMBL/GenBank/DDBJ databases">
        <title>Complete genome sequence of Bacillus anthracis Sterne.</title>
        <authorList>
            <person name="Brettin T.S."/>
            <person name="Bruce D."/>
            <person name="Challacombe J.F."/>
            <person name="Gilna P."/>
            <person name="Han C."/>
            <person name="Hill K."/>
            <person name="Hitchcock P."/>
            <person name="Jackson P."/>
            <person name="Keim P."/>
            <person name="Longmire J."/>
            <person name="Lucas S."/>
            <person name="Okinaka R."/>
            <person name="Richardson P."/>
            <person name="Rubin E."/>
            <person name="Tice H."/>
        </authorList>
    </citation>
    <scope>NUCLEOTIDE SEQUENCE [LARGE SCALE GENOMIC DNA]</scope>
    <source>
        <strain>Sterne</strain>
    </source>
</reference>
<reference key="3">
    <citation type="journal article" date="2009" name="J. Bacteriol.">
        <title>The complete genome sequence of Bacillus anthracis Ames 'Ancestor'.</title>
        <authorList>
            <person name="Ravel J."/>
            <person name="Jiang L."/>
            <person name="Stanley S.T."/>
            <person name="Wilson M.R."/>
            <person name="Decker R.S."/>
            <person name="Read T.D."/>
            <person name="Worsham P."/>
            <person name="Keim P.S."/>
            <person name="Salzberg S.L."/>
            <person name="Fraser-Liggett C.M."/>
            <person name="Rasko D.A."/>
        </authorList>
    </citation>
    <scope>NUCLEOTIDE SEQUENCE [LARGE SCALE GENOMIC DNA]</scope>
    <source>
        <strain>Ames ancestor</strain>
    </source>
</reference>
<evidence type="ECO:0000255" key="1">
    <source>
        <dbReference type="HAMAP-Rule" id="MF_01692"/>
    </source>
</evidence>
<sequence>MAVSKFVQIRRDLHKIPEIGFKEWKTQQYILDYIGTLSNEHVEVKVWRTGVIVKVKGKNPEKVIGYRADIDGLPITEETGYEFASVHEGMMHACGHDLHTTIGLGLLTAAVTERIDDDLVFLFQPAEEGPGGALPMLESEELKEWKPNIILGLHIAPEYPVGTIATKEGLLFANTSELYVDLKGKGGHAAYPHTANDMIVAASHLVTQLQSVISRNVNPLDSAVITIGKITGGTVQNIIAEKSRLEGTIRTLSVESMSRVKSRIEAIVAGIEASFQCEAVIDYGAMYHQVYNHEALTREFMQFVSEQTDMKVITCTEAMTGEDFGYMLQEIPGFMFWLGVNSEYGLHHAKLRPDEEAIEKAIVFLDQYVKWKGTRK</sequence>
<feature type="chain" id="PRO_0000376736" description="N-acetyldiaminopimelate deacetylase">
    <location>
        <begin position="1"/>
        <end position="376"/>
    </location>
</feature>
<feature type="active site" evidence="1">
    <location>
        <position position="69"/>
    </location>
</feature>
<feature type="active site" description="Proton acceptor" evidence="1">
    <location>
        <position position="128"/>
    </location>
</feature>
<protein>
    <recommendedName>
        <fullName evidence="1">N-acetyldiaminopimelate deacetylase</fullName>
        <ecNumber evidence="1">3.5.1.47</ecNumber>
    </recommendedName>
</protein>
<gene>
    <name type="ordered locus">BA_4193</name>
    <name type="ordered locus">GBAA_4193</name>
    <name type="ordered locus">BAS3890</name>
</gene>
<organism>
    <name type="scientific">Bacillus anthracis</name>
    <dbReference type="NCBI Taxonomy" id="1392"/>
    <lineage>
        <taxon>Bacteria</taxon>
        <taxon>Bacillati</taxon>
        <taxon>Bacillota</taxon>
        <taxon>Bacilli</taxon>
        <taxon>Bacillales</taxon>
        <taxon>Bacillaceae</taxon>
        <taxon>Bacillus</taxon>
        <taxon>Bacillus cereus group</taxon>
    </lineage>
</organism>
<proteinExistence type="inferred from homology"/>
<keyword id="KW-0028">Amino-acid biosynthesis</keyword>
<keyword id="KW-0220">Diaminopimelate biosynthesis</keyword>
<keyword id="KW-0378">Hydrolase</keyword>
<keyword id="KW-0457">Lysine biosynthesis</keyword>
<keyword id="KW-1185">Reference proteome</keyword>
<accession>Q81MQ3</accession>
<accession>Q6HU48</accession>
<accession>Q6KND2</accession>
<dbReference type="EC" id="3.5.1.47" evidence="1"/>
<dbReference type="EMBL" id="AE016879">
    <property type="protein sequence ID" value="AAP27915.1"/>
    <property type="molecule type" value="Genomic_DNA"/>
</dbReference>
<dbReference type="EMBL" id="AE017334">
    <property type="protein sequence ID" value="AAT33312.1"/>
    <property type="molecule type" value="Genomic_DNA"/>
</dbReference>
<dbReference type="EMBL" id="AE017225">
    <property type="protein sequence ID" value="AAT56191.1"/>
    <property type="molecule type" value="Genomic_DNA"/>
</dbReference>
<dbReference type="RefSeq" id="NP_846429.1">
    <property type="nucleotide sequence ID" value="NC_003997.3"/>
</dbReference>
<dbReference type="RefSeq" id="WP_000301166.1">
    <property type="nucleotide sequence ID" value="NZ_WXXJ01000027.1"/>
</dbReference>
<dbReference type="RefSeq" id="YP_030140.1">
    <property type="nucleotide sequence ID" value="NC_005945.1"/>
</dbReference>
<dbReference type="SMR" id="Q81MQ3"/>
<dbReference type="STRING" id="261594.GBAA_4193"/>
<dbReference type="MEROPS" id="M20.A27"/>
<dbReference type="DNASU" id="1088811"/>
<dbReference type="GeneID" id="45023868"/>
<dbReference type="KEGG" id="ban:BA_4193"/>
<dbReference type="KEGG" id="bar:GBAA_4193"/>
<dbReference type="KEGG" id="bat:BAS3890"/>
<dbReference type="PATRIC" id="fig|198094.11.peg.4162"/>
<dbReference type="eggNOG" id="COG1473">
    <property type="taxonomic scope" value="Bacteria"/>
</dbReference>
<dbReference type="HOGENOM" id="CLU_023257_0_1_9"/>
<dbReference type="OMA" id="ITSACDR"/>
<dbReference type="OrthoDB" id="9776731at2"/>
<dbReference type="UniPathway" id="UPA00034">
    <property type="reaction ID" value="UER00024"/>
</dbReference>
<dbReference type="Proteomes" id="UP000000427">
    <property type="component" value="Chromosome"/>
</dbReference>
<dbReference type="Proteomes" id="UP000000594">
    <property type="component" value="Chromosome"/>
</dbReference>
<dbReference type="GO" id="GO:0050118">
    <property type="term" value="F:N-acetyldiaminopimelate deacetylase activity"/>
    <property type="evidence" value="ECO:0007669"/>
    <property type="project" value="UniProtKB-UniRule"/>
</dbReference>
<dbReference type="GO" id="GO:0019877">
    <property type="term" value="P:diaminopimelate biosynthetic process"/>
    <property type="evidence" value="ECO:0007669"/>
    <property type="project" value="UniProtKB-UniRule"/>
</dbReference>
<dbReference type="GO" id="GO:0009089">
    <property type="term" value="P:lysine biosynthetic process via diaminopimelate"/>
    <property type="evidence" value="ECO:0007669"/>
    <property type="project" value="UniProtKB-UniRule"/>
</dbReference>
<dbReference type="CDD" id="cd05670">
    <property type="entry name" value="M20_Acy1_YkuR-like"/>
    <property type="match status" value="1"/>
</dbReference>
<dbReference type="FunFam" id="3.30.70.360:FF:000001">
    <property type="entry name" value="N-acetyldiaminopimelate deacetylase"/>
    <property type="match status" value="1"/>
</dbReference>
<dbReference type="Gene3D" id="3.30.70.360">
    <property type="match status" value="1"/>
</dbReference>
<dbReference type="Gene3D" id="3.40.630.10">
    <property type="entry name" value="Zn peptidases"/>
    <property type="match status" value="1"/>
</dbReference>
<dbReference type="HAMAP" id="MF_01692">
    <property type="entry name" value="DapEL"/>
    <property type="match status" value="1"/>
</dbReference>
<dbReference type="InterPro" id="IPR023905">
    <property type="entry name" value="AcetylDAP_deacetylase"/>
</dbReference>
<dbReference type="InterPro" id="IPR017439">
    <property type="entry name" value="Amidohydrolase"/>
</dbReference>
<dbReference type="InterPro" id="IPR036264">
    <property type="entry name" value="Bact_exopeptidase_dim_dom"/>
</dbReference>
<dbReference type="InterPro" id="IPR002933">
    <property type="entry name" value="Peptidase_M20"/>
</dbReference>
<dbReference type="InterPro" id="IPR011650">
    <property type="entry name" value="Peptidase_M20_dimer"/>
</dbReference>
<dbReference type="NCBIfam" id="TIGR01891">
    <property type="entry name" value="amidohydrolases"/>
    <property type="match status" value="1"/>
</dbReference>
<dbReference type="PANTHER" id="PTHR11014:SF98">
    <property type="entry name" value="N-ACETYLDIAMINOPIMELATE DEACETYLASE"/>
    <property type="match status" value="1"/>
</dbReference>
<dbReference type="PANTHER" id="PTHR11014">
    <property type="entry name" value="PEPTIDASE M20 FAMILY MEMBER"/>
    <property type="match status" value="1"/>
</dbReference>
<dbReference type="Pfam" id="PF07687">
    <property type="entry name" value="M20_dimer"/>
    <property type="match status" value="1"/>
</dbReference>
<dbReference type="Pfam" id="PF01546">
    <property type="entry name" value="Peptidase_M20"/>
    <property type="match status" value="1"/>
</dbReference>
<dbReference type="PIRSF" id="PIRSF005962">
    <property type="entry name" value="Pept_M20D_amidohydro"/>
    <property type="match status" value="1"/>
</dbReference>
<dbReference type="SUPFAM" id="SSF55031">
    <property type="entry name" value="Bacterial exopeptidase dimerisation domain"/>
    <property type="match status" value="1"/>
</dbReference>
<dbReference type="SUPFAM" id="SSF53187">
    <property type="entry name" value="Zn-dependent exopeptidases"/>
    <property type="match status" value="1"/>
</dbReference>